<keyword id="KW-0687">Ribonucleoprotein</keyword>
<keyword id="KW-0689">Ribosomal protein</keyword>
<organism>
    <name type="scientific">Methanococcus maripaludis (strain C7 / ATCC BAA-1331)</name>
    <dbReference type="NCBI Taxonomy" id="426368"/>
    <lineage>
        <taxon>Archaea</taxon>
        <taxon>Methanobacteriati</taxon>
        <taxon>Methanobacteriota</taxon>
        <taxon>Methanomada group</taxon>
        <taxon>Methanococci</taxon>
        <taxon>Methanococcales</taxon>
        <taxon>Methanococcaceae</taxon>
        <taxon>Methanococcus</taxon>
    </lineage>
</organism>
<comment type="similarity">
    <text evidence="1">Belongs to the eukaryotic ribosomal protein eL39 family.</text>
</comment>
<reference key="1">
    <citation type="submission" date="2007-06" db="EMBL/GenBank/DDBJ databases">
        <title>Complete sequence of Methanococcus maripaludis C7.</title>
        <authorList>
            <consortium name="US DOE Joint Genome Institute"/>
            <person name="Copeland A."/>
            <person name="Lucas S."/>
            <person name="Lapidus A."/>
            <person name="Barry K."/>
            <person name="Glavina del Rio T."/>
            <person name="Dalin E."/>
            <person name="Tice H."/>
            <person name="Pitluck S."/>
            <person name="Clum A."/>
            <person name="Schmutz J."/>
            <person name="Larimer F."/>
            <person name="Land M."/>
            <person name="Hauser L."/>
            <person name="Kyrpides N."/>
            <person name="Anderson I."/>
            <person name="Sieprawska-Lupa M."/>
            <person name="Whitman W.B."/>
            <person name="Richardson P."/>
        </authorList>
    </citation>
    <scope>NUCLEOTIDE SEQUENCE [LARGE SCALE GENOMIC DNA]</scope>
    <source>
        <strain>C7 / ATCC BAA-1331</strain>
    </source>
</reference>
<name>RL39_METM7</name>
<feature type="chain" id="PRO_1000051689" description="Large ribosomal subunit protein eL39">
    <location>
        <begin position="1"/>
        <end position="51"/>
    </location>
</feature>
<feature type="region of interest" description="Disordered" evidence="2">
    <location>
        <begin position="32"/>
        <end position="51"/>
    </location>
</feature>
<feature type="compositionally biased region" description="Basic residues" evidence="2">
    <location>
        <begin position="33"/>
        <end position="51"/>
    </location>
</feature>
<proteinExistence type="inferred from homology"/>
<evidence type="ECO:0000255" key="1">
    <source>
        <dbReference type="HAMAP-Rule" id="MF_00629"/>
    </source>
</evidence>
<evidence type="ECO:0000256" key="2">
    <source>
        <dbReference type="SAM" id="MobiDB-lite"/>
    </source>
</evidence>
<evidence type="ECO:0000305" key="3"/>
<protein>
    <recommendedName>
        <fullName evidence="1">Large ribosomal subunit protein eL39</fullName>
    </recommendedName>
    <alternativeName>
        <fullName evidence="3">50S ribosomal protein L39e</fullName>
    </alternativeName>
</protein>
<sequence length="51" mass="6004">MAGNKPLGKKIRLAKALKQNRRVPMFAIARTKGSVKQHPKMRHWRRKNLKK</sequence>
<dbReference type="EMBL" id="CP000745">
    <property type="protein sequence ID" value="ABR66225.1"/>
    <property type="molecule type" value="Genomic_DNA"/>
</dbReference>
<dbReference type="SMR" id="A6VIE9"/>
<dbReference type="STRING" id="426368.MmarC7_1159"/>
<dbReference type="KEGG" id="mmz:MmarC7_1159"/>
<dbReference type="eggNOG" id="arCOG04177">
    <property type="taxonomic scope" value="Archaea"/>
</dbReference>
<dbReference type="HOGENOM" id="CLU_181948_4_0_2"/>
<dbReference type="OrthoDB" id="65887at2157"/>
<dbReference type="GO" id="GO:1990904">
    <property type="term" value="C:ribonucleoprotein complex"/>
    <property type="evidence" value="ECO:0007669"/>
    <property type="project" value="UniProtKB-KW"/>
</dbReference>
<dbReference type="GO" id="GO:0005840">
    <property type="term" value="C:ribosome"/>
    <property type="evidence" value="ECO:0007669"/>
    <property type="project" value="UniProtKB-KW"/>
</dbReference>
<dbReference type="GO" id="GO:0003735">
    <property type="term" value="F:structural constituent of ribosome"/>
    <property type="evidence" value="ECO:0007669"/>
    <property type="project" value="InterPro"/>
</dbReference>
<dbReference type="GO" id="GO:0006412">
    <property type="term" value="P:translation"/>
    <property type="evidence" value="ECO:0007669"/>
    <property type="project" value="UniProtKB-UniRule"/>
</dbReference>
<dbReference type="Gene3D" id="1.10.1620.10">
    <property type="entry name" value="Ribosomal protein L39e"/>
    <property type="match status" value="1"/>
</dbReference>
<dbReference type="HAMAP" id="MF_00629">
    <property type="entry name" value="Ribosomal_eL39"/>
    <property type="match status" value="1"/>
</dbReference>
<dbReference type="InterPro" id="IPR000077">
    <property type="entry name" value="Ribosomal_eL39"/>
</dbReference>
<dbReference type="InterPro" id="IPR020083">
    <property type="entry name" value="Ribosomal_eL39_CS"/>
</dbReference>
<dbReference type="InterPro" id="IPR023626">
    <property type="entry name" value="Ribosomal_eL39_dom_sf"/>
</dbReference>
<dbReference type="NCBIfam" id="NF002316">
    <property type="entry name" value="PRK01242.1"/>
    <property type="match status" value="1"/>
</dbReference>
<dbReference type="Pfam" id="PF00832">
    <property type="entry name" value="Ribosomal_L39"/>
    <property type="match status" value="1"/>
</dbReference>
<dbReference type="SUPFAM" id="SSF48662">
    <property type="entry name" value="Ribosomal protein L39e"/>
    <property type="match status" value="1"/>
</dbReference>
<dbReference type="PROSITE" id="PS00051">
    <property type="entry name" value="RIBOSOMAL_L39E"/>
    <property type="match status" value="1"/>
</dbReference>
<gene>
    <name evidence="1" type="primary">rpl39e</name>
    <name type="ordered locus">MmarC7_1159</name>
</gene>
<accession>A6VIE9</accession>